<reference key="1">
    <citation type="journal article" date="2008" name="J. Bacteriol.">
        <title>Complete genome sequence of uropathogenic Proteus mirabilis, a master of both adherence and motility.</title>
        <authorList>
            <person name="Pearson M.M."/>
            <person name="Sebaihia M."/>
            <person name="Churcher C."/>
            <person name="Quail M.A."/>
            <person name="Seshasayee A.S."/>
            <person name="Luscombe N.M."/>
            <person name="Abdellah Z."/>
            <person name="Arrosmith C."/>
            <person name="Atkin B."/>
            <person name="Chillingworth T."/>
            <person name="Hauser H."/>
            <person name="Jagels K."/>
            <person name="Moule S."/>
            <person name="Mungall K."/>
            <person name="Norbertczak H."/>
            <person name="Rabbinowitsch E."/>
            <person name="Walker D."/>
            <person name="Whithead S."/>
            <person name="Thomson N.R."/>
            <person name="Rather P.N."/>
            <person name="Parkhill J."/>
            <person name="Mobley H.L.T."/>
        </authorList>
    </citation>
    <scope>NUCLEOTIDE SEQUENCE [LARGE SCALE GENOMIC DNA]</scope>
    <source>
        <strain>HI4320</strain>
    </source>
</reference>
<name>SYD_PROMH</name>
<evidence type="ECO:0000255" key="1">
    <source>
        <dbReference type="HAMAP-Rule" id="MF_00044"/>
    </source>
</evidence>
<protein>
    <recommendedName>
        <fullName evidence="1">Aspartate--tRNA ligase</fullName>
        <ecNumber evidence="1">6.1.1.12</ecNumber>
    </recommendedName>
    <alternativeName>
        <fullName evidence="1">Aspartyl-tRNA synthetase</fullName>
        <shortName evidence="1">AspRS</shortName>
    </alternativeName>
</protein>
<accession>B4ETP3</accession>
<feature type="chain" id="PRO_1000091028" description="Aspartate--tRNA ligase">
    <location>
        <begin position="1"/>
        <end position="594"/>
    </location>
</feature>
<feature type="region of interest" description="Aspartate" evidence="1">
    <location>
        <begin position="195"/>
        <end position="198"/>
    </location>
</feature>
<feature type="binding site" evidence="1">
    <location>
        <position position="171"/>
    </location>
    <ligand>
        <name>L-aspartate</name>
        <dbReference type="ChEBI" id="CHEBI:29991"/>
    </ligand>
</feature>
<feature type="binding site" evidence="1">
    <location>
        <begin position="217"/>
        <end position="219"/>
    </location>
    <ligand>
        <name>ATP</name>
        <dbReference type="ChEBI" id="CHEBI:30616"/>
    </ligand>
</feature>
<feature type="binding site" evidence="1">
    <location>
        <position position="217"/>
    </location>
    <ligand>
        <name>L-aspartate</name>
        <dbReference type="ChEBI" id="CHEBI:29991"/>
    </ligand>
</feature>
<feature type="binding site" evidence="1">
    <location>
        <position position="226"/>
    </location>
    <ligand>
        <name>ATP</name>
        <dbReference type="ChEBI" id="CHEBI:30616"/>
    </ligand>
</feature>
<feature type="binding site" evidence="1">
    <location>
        <position position="449"/>
    </location>
    <ligand>
        <name>L-aspartate</name>
        <dbReference type="ChEBI" id="CHEBI:29991"/>
    </ligand>
</feature>
<feature type="binding site" evidence="1">
    <location>
        <position position="483"/>
    </location>
    <ligand>
        <name>ATP</name>
        <dbReference type="ChEBI" id="CHEBI:30616"/>
    </ligand>
</feature>
<feature type="binding site" evidence="1">
    <location>
        <position position="490"/>
    </location>
    <ligand>
        <name>L-aspartate</name>
        <dbReference type="ChEBI" id="CHEBI:29991"/>
    </ligand>
</feature>
<feature type="binding site" evidence="1">
    <location>
        <begin position="535"/>
        <end position="538"/>
    </location>
    <ligand>
        <name>ATP</name>
        <dbReference type="ChEBI" id="CHEBI:30616"/>
    </ligand>
</feature>
<gene>
    <name evidence="1" type="primary">aspS</name>
    <name type="ordered locus">PMI1111</name>
</gene>
<proteinExistence type="inferred from homology"/>
<sequence>MRTNYCGQLNSAHVGQKVTLCGWVNRRRDLGGLIFIDMRDREGIVQVFFDPEQKEAFSQASELRNEFCIQVTGTVRARPDSQVNKNMATGEIELAAESLSIFNRSEALPLDSNQTNTEERRLTYRYLDLRRPEMSQRLKTRAKITSFVRRFMDGEGFLDVETPMLTKATPEGARDYLVPSRVHKGKFYALPQSPQLFKQLLMMSGFDRYYQIVKCFRDEDLRADRQPEFTQIDVETSFMTAEQVREVMERMIHALWLDILNVDLGAFPVMTFAEAMRRYGSDKPDLRNPMELIDIADLVKNVEFSVFAQAANDEKCRVIALRVPGGASLTRKNIDEYTQFVSIYGAKGLAWMKVNEKAKGIEGVQSPIAKFLTNDVVNSILAATNATDGDLIFFGAGRQGTMSDAMGALRLKVGRDLELTDLNAWKPLWVIDFPMFEEDEDTGSLSAMHHPFTSPKDLTPAELTAHPVGAVANAYDMVINGYEVGGGSVRIHRNEMQQAVFSILGITPDEQREKFGFLLDALKFGTPPHAGLAFGLDRLVMLLTGTDNIRDVIAFPKTTAAACLMTNAPSFANEDALKELAIQVTEKEVSTDNE</sequence>
<comment type="function">
    <text evidence="1">Catalyzes the attachment of L-aspartate to tRNA(Asp) in a two-step reaction: L-aspartate is first activated by ATP to form Asp-AMP and then transferred to the acceptor end of tRNA(Asp).</text>
</comment>
<comment type="catalytic activity">
    <reaction evidence="1">
        <text>tRNA(Asp) + L-aspartate + ATP = L-aspartyl-tRNA(Asp) + AMP + diphosphate</text>
        <dbReference type="Rhea" id="RHEA:19649"/>
        <dbReference type="Rhea" id="RHEA-COMP:9660"/>
        <dbReference type="Rhea" id="RHEA-COMP:9678"/>
        <dbReference type="ChEBI" id="CHEBI:29991"/>
        <dbReference type="ChEBI" id="CHEBI:30616"/>
        <dbReference type="ChEBI" id="CHEBI:33019"/>
        <dbReference type="ChEBI" id="CHEBI:78442"/>
        <dbReference type="ChEBI" id="CHEBI:78516"/>
        <dbReference type="ChEBI" id="CHEBI:456215"/>
        <dbReference type="EC" id="6.1.1.12"/>
    </reaction>
</comment>
<comment type="subunit">
    <text evidence="1">Homodimer.</text>
</comment>
<comment type="subcellular location">
    <subcellularLocation>
        <location evidence="1">Cytoplasm</location>
    </subcellularLocation>
</comment>
<comment type="similarity">
    <text evidence="1">Belongs to the class-II aminoacyl-tRNA synthetase family. Type 1 subfamily.</text>
</comment>
<keyword id="KW-0030">Aminoacyl-tRNA synthetase</keyword>
<keyword id="KW-0067">ATP-binding</keyword>
<keyword id="KW-0963">Cytoplasm</keyword>
<keyword id="KW-0436">Ligase</keyword>
<keyword id="KW-0547">Nucleotide-binding</keyword>
<keyword id="KW-0648">Protein biosynthesis</keyword>
<keyword id="KW-1185">Reference proteome</keyword>
<organism>
    <name type="scientific">Proteus mirabilis (strain HI4320)</name>
    <dbReference type="NCBI Taxonomy" id="529507"/>
    <lineage>
        <taxon>Bacteria</taxon>
        <taxon>Pseudomonadati</taxon>
        <taxon>Pseudomonadota</taxon>
        <taxon>Gammaproteobacteria</taxon>
        <taxon>Enterobacterales</taxon>
        <taxon>Morganellaceae</taxon>
        <taxon>Proteus</taxon>
    </lineage>
</organism>
<dbReference type="EC" id="6.1.1.12" evidence="1"/>
<dbReference type="EMBL" id="AM942759">
    <property type="protein sequence ID" value="CAR42399.1"/>
    <property type="molecule type" value="Genomic_DNA"/>
</dbReference>
<dbReference type="RefSeq" id="WP_004247980.1">
    <property type="nucleotide sequence ID" value="NC_010554.1"/>
</dbReference>
<dbReference type="SMR" id="B4ETP3"/>
<dbReference type="EnsemblBacteria" id="CAR42399">
    <property type="protein sequence ID" value="CAR42399"/>
    <property type="gene ID" value="PMI1111"/>
</dbReference>
<dbReference type="GeneID" id="6799941"/>
<dbReference type="KEGG" id="pmr:PMI1111"/>
<dbReference type="PATRIC" id="fig|529507.6.peg.1075"/>
<dbReference type="eggNOG" id="COG0173">
    <property type="taxonomic scope" value="Bacteria"/>
</dbReference>
<dbReference type="HOGENOM" id="CLU_014330_3_2_6"/>
<dbReference type="Proteomes" id="UP000008319">
    <property type="component" value="Chromosome"/>
</dbReference>
<dbReference type="GO" id="GO:0005737">
    <property type="term" value="C:cytoplasm"/>
    <property type="evidence" value="ECO:0007669"/>
    <property type="project" value="UniProtKB-SubCell"/>
</dbReference>
<dbReference type="GO" id="GO:0004815">
    <property type="term" value="F:aspartate-tRNA ligase activity"/>
    <property type="evidence" value="ECO:0007669"/>
    <property type="project" value="UniProtKB-UniRule"/>
</dbReference>
<dbReference type="GO" id="GO:0005524">
    <property type="term" value="F:ATP binding"/>
    <property type="evidence" value="ECO:0007669"/>
    <property type="project" value="UniProtKB-UniRule"/>
</dbReference>
<dbReference type="GO" id="GO:0003676">
    <property type="term" value="F:nucleic acid binding"/>
    <property type="evidence" value="ECO:0007669"/>
    <property type="project" value="InterPro"/>
</dbReference>
<dbReference type="GO" id="GO:0006422">
    <property type="term" value="P:aspartyl-tRNA aminoacylation"/>
    <property type="evidence" value="ECO:0007669"/>
    <property type="project" value="UniProtKB-UniRule"/>
</dbReference>
<dbReference type="CDD" id="cd00777">
    <property type="entry name" value="AspRS_core"/>
    <property type="match status" value="1"/>
</dbReference>
<dbReference type="CDD" id="cd04317">
    <property type="entry name" value="EcAspRS_like_N"/>
    <property type="match status" value="1"/>
</dbReference>
<dbReference type="FunFam" id="2.40.50.140:FF:000080">
    <property type="entry name" value="Aspartate--tRNA ligase"/>
    <property type="match status" value="1"/>
</dbReference>
<dbReference type="Gene3D" id="3.30.930.10">
    <property type="entry name" value="Bira Bifunctional Protein, Domain 2"/>
    <property type="match status" value="1"/>
</dbReference>
<dbReference type="Gene3D" id="3.30.1360.30">
    <property type="entry name" value="GAD-like domain"/>
    <property type="match status" value="1"/>
</dbReference>
<dbReference type="Gene3D" id="2.40.50.140">
    <property type="entry name" value="Nucleic acid-binding proteins"/>
    <property type="match status" value="1"/>
</dbReference>
<dbReference type="HAMAP" id="MF_00044">
    <property type="entry name" value="Asp_tRNA_synth_type1"/>
    <property type="match status" value="1"/>
</dbReference>
<dbReference type="InterPro" id="IPR004364">
    <property type="entry name" value="Aa-tRNA-synt_II"/>
</dbReference>
<dbReference type="InterPro" id="IPR006195">
    <property type="entry name" value="aa-tRNA-synth_II"/>
</dbReference>
<dbReference type="InterPro" id="IPR045864">
    <property type="entry name" value="aa-tRNA-synth_II/BPL/LPL"/>
</dbReference>
<dbReference type="InterPro" id="IPR004524">
    <property type="entry name" value="Asp-tRNA-ligase_1"/>
</dbReference>
<dbReference type="InterPro" id="IPR047089">
    <property type="entry name" value="Asp-tRNA-ligase_1_N"/>
</dbReference>
<dbReference type="InterPro" id="IPR002312">
    <property type="entry name" value="Asp/Asn-tRNA-synth_IIb"/>
</dbReference>
<dbReference type="InterPro" id="IPR047090">
    <property type="entry name" value="AspRS_core"/>
</dbReference>
<dbReference type="InterPro" id="IPR004115">
    <property type="entry name" value="GAD-like_sf"/>
</dbReference>
<dbReference type="InterPro" id="IPR029351">
    <property type="entry name" value="GAD_dom"/>
</dbReference>
<dbReference type="InterPro" id="IPR012340">
    <property type="entry name" value="NA-bd_OB-fold"/>
</dbReference>
<dbReference type="InterPro" id="IPR004365">
    <property type="entry name" value="NA-bd_OB_tRNA"/>
</dbReference>
<dbReference type="NCBIfam" id="TIGR00459">
    <property type="entry name" value="aspS_bact"/>
    <property type="match status" value="1"/>
</dbReference>
<dbReference type="NCBIfam" id="NF001750">
    <property type="entry name" value="PRK00476.1"/>
    <property type="match status" value="1"/>
</dbReference>
<dbReference type="PANTHER" id="PTHR22594:SF5">
    <property type="entry name" value="ASPARTATE--TRNA LIGASE, MITOCHONDRIAL"/>
    <property type="match status" value="1"/>
</dbReference>
<dbReference type="PANTHER" id="PTHR22594">
    <property type="entry name" value="ASPARTYL/LYSYL-TRNA SYNTHETASE"/>
    <property type="match status" value="1"/>
</dbReference>
<dbReference type="Pfam" id="PF02938">
    <property type="entry name" value="GAD"/>
    <property type="match status" value="1"/>
</dbReference>
<dbReference type="Pfam" id="PF00152">
    <property type="entry name" value="tRNA-synt_2"/>
    <property type="match status" value="1"/>
</dbReference>
<dbReference type="Pfam" id="PF01336">
    <property type="entry name" value="tRNA_anti-codon"/>
    <property type="match status" value="1"/>
</dbReference>
<dbReference type="PRINTS" id="PR01042">
    <property type="entry name" value="TRNASYNTHASP"/>
</dbReference>
<dbReference type="SUPFAM" id="SSF55681">
    <property type="entry name" value="Class II aaRS and biotin synthetases"/>
    <property type="match status" value="1"/>
</dbReference>
<dbReference type="SUPFAM" id="SSF55261">
    <property type="entry name" value="GAD domain-like"/>
    <property type="match status" value="1"/>
</dbReference>
<dbReference type="SUPFAM" id="SSF50249">
    <property type="entry name" value="Nucleic acid-binding proteins"/>
    <property type="match status" value="1"/>
</dbReference>
<dbReference type="PROSITE" id="PS50862">
    <property type="entry name" value="AA_TRNA_LIGASE_II"/>
    <property type="match status" value="1"/>
</dbReference>